<accession>Q2RTS7</accession>
<name>IHFA_RHORT</name>
<gene>
    <name evidence="1" type="primary">ihfA</name>
    <name evidence="1" type="synonym">himA</name>
    <name type="ordered locus">Rru_A1668</name>
</gene>
<reference key="1">
    <citation type="journal article" date="2011" name="Stand. Genomic Sci.">
        <title>Complete genome sequence of Rhodospirillum rubrum type strain (S1).</title>
        <authorList>
            <person name="Munk A.C."/>
            <person name="Copeland A."/>
            <person name="Lucas S."/>
            <person name="Lapidus A."/>
            <person name="Del Rio T.G."/>
            <person name="Barry K."/>
            <person name="Detter J.C."/>
            <person name="Hammon N."/>
            <person name="Israni S."/>
            <person name="Pitluck S."/>
            <person name="Brettin T."/>
            <person name="Bruce D."/>
            <person name="Han C."/>
            <person name="Tapia R."/>
            <person name="Gilna P."/>
            <person name="Schmutz J."/>
            <person name="Larimer F."/>
            <person name="Land M."/>
            <person name="Kyrpides N.C."/>
            <person name="Mavromatis K."/>
            <person name="Richardson P."/>
            <person name="Rohde M."/>
            <person name="Goeker M."/>
            <person name="Klenk H.P."/>
            <person name="Zhang Y."/>
            <person name="Roberts G.P."/>
            <person name="Reslewic S."/>
            <person name="Schwartz D.C."/>
        </authorList>
    </citation>
    <scope>NUCLEOTIDE SEQUENCE [LARGE SCALE GENOMIC DNA]</scope>
    <source>
        <strain>ATCC 11170 / ATH 1.1.1 / DSM 467 / LMG 4362 / NCIMB 8255 / S1</strain>
    </source>
</reference>
<proteinExistence type="inferred from homology"/>
<comment type="function">
    <text evidence="1">This protein is one of the two subunits of integration host factor, a specific DNA-binding protein that functions in genetic recombination as well as in transcriptional and translational control.</text>
</comment>
<comment type="subunit">
    <text evidence="1">Heterodimer of an alpha and a beta chain.</text>
</comment>
<comment type="similarity">
    <text evidence="1">Belongs to the bacterial histone-like protein family.</text>
</comment>
<evidence type="ECO:0000255" key="1">
    <source>
        <dbReference type="HAMAP-Rule" id="MF_00380"/>
    </source>
</evidence>
<protein>
    <recommendedName>
        <fullName evidence="1">Integration host factor subunit alpha</fullName>
        <shortName evidence="1">IHF-alpha</shortName>
    </recommendedName>
</protein>
<keyword id="KW-0233">DNA recombination</keyword>
<keyword id="KW-0238">DNA-binding</keyword>
<keyword id="KW-1185">Reference proteome</keyword>
<keyword id="KW-0804">Transcription</keyword>
<keyword id="KW-0805">Transcription regulation</keyword>
<keyword id="KW-0810">Translation regulation</keyword>
<dbReference type="EMBL" id="CP000230">
    <property type="protein sequence ID" value="ABC22468.1"/>
    <property type="molecule type" value="Genomic_DNA"/>
</dbReference>
<dbReference type="RefSeq" id="WP_011389358.1">
    <property type="nucleotide sequence ID" value="NC_007643.1"/>
</dbReference>
<dbReference type="RefSeq" id="YP_426755.1">
    <property type="nucleotide sequence ID" value="NC_007643.1"/>
</dbReference>
<dbReference type="SMR" id="Q2RTS7"/>
<dbReference type="STRING" id="269796.Rru_A1668"/>
<dbReference type="EnsemblBacteria" id="ABC22468">
    <property type="protein sequence ID" value="ABC22468"/>
    <property type="gene ID" value="Rru_A1668"/>
</dbReference>
<dbReference type="KEGG" id="rru:Rru_A1668"/>
<dbReference type="PATRIC" id="fig|269796.9.peg.1746"/>
<dbReference type="eggNOG" id="COG0776">
    <property type="taxonomic scope" value="Bacteria"/>
</dbReference>
<dbReference type="HOGENOM" id="CLU_105066_1_1_5"/>
<dbReference type="PhylomeDB" id="Q2RTS7"/>
<dbReference type="Proteomes" id="UP000001929">
    <property type="component" value="Chromosome"/>
</dbReference>
<dbReference type="GO" id="GO:0005829">
    <property type="term" value="C:cytosol"/>
    <property type="evidence" value="ECO:0007669"/>
    <property type="project" value="TreeGrafter"/>
</dbReference>
<dbReference type="GO" id="GO:0003677">
    <property type="term" value="F:DNA binding"/>
    <property type="evidence" value="ECO:0007669"/>
    <property type="project" value="UniProtKB-UniRule"/>
</dbReference>
<dbReference type="GO" id="GO:0030527">
    <property type="term" value="F:structural constituent of chromatin"/>
    <property type="evidence" value="ECO:0007669"/>
    <property type="project" value="InterPro"/>
</dbReference>
<dbReference type="GO" id="GO:0006310">
    <property type="term" value="P:DNA recombination"/>
    <property type="evidence" value="ECO:0007669"/>
    <property type="project" value="UniProtKB-UniRule"/>
</dbReference>
<dbReference type="GO" id="GO:0009893">
    <property type="term" value="P:positive regulation of metabolic process"/>
    <property type="evidence" value="ECO:0007669"/>
    <property type="project" value="UniProtKB-ARBA"/>
</dbReference>
<dbReference type="GO" id="GO:0006355">
    <property type="term" value="P:regulation of DNA-templated transcription"/>
    <property type="evidence" value="ECO:0007669"/>
    <property type="project" value="UniProtKB-UniRule"/>
</dbReference>
<dbReference type="GO" id="GO:0006417">
    <property type="term" value="P:regulation of translation"/>
    <property type="evidence" value="ECO:0007669"/>
    <property type="project" value="UniProtKB-UniRule"/>
</dbReference>
<dbReference type="CDD" id="cd13835">
    <property type="entry name" value="IHF_A"/>
    <property type="match status" value="1"/>
</dbReference>
<dbReference type="Gene3D" id="4.10.520.10">
    <property type="entry name" value="IHF-like DNA-binding proteins"/>
    <property type="match status" value="1"/>
</dbReference>
<dbReference type="HAMAP" id="MF_00380">
    <property type="entry name" value="IHF_alpha"/>
    <property type="match status" value="1"/>
</dbReference>
<dbReference type="InterPro" id="IPR000119">
    <property type="entry name" value="Hist_DNA-bd"/>
</dbReference>
<dbReference type="InterPro" id="IPR020816">
    <property type="entry name" value="Histone-like_DNA-bd_CS"/>
</dbReference>
<dbReference type="InterPro" id="IPR010992">
    <property type="entry name" value="IHF-like_DNA-bd_dom_sf"/>
</dbReference>
<dbReference type="InterPro" id="IPR005684">
    <property type="entry name" value="IHF_alpha"/>
</dbReference>
<dbReference type="NCBIfam" id="TIGR00987">
    <property type="entry name" value="himA"/>
    <property type="match status" value="1"/>
</dbReference>
<dbReference type="NCBIfam" id="NF001401">
    <property type="entry name" value="PRK00285.1"/>
    <property type="match status" value="1"/>
</dbReference>
<dbReference type="PANTHER" id="PTHR33175">
    <property type="entry name" value="DNA-BINDING PROTEIN HU"/>
    <property type="match status" value="1"/>
</dbReference>
<dbReference type="PANTHER" id="PTHR33175:SF2">
    <property type="entry name" value="INTEGRATION HOST FACTOR SUBUNIT ALPHA"/>
    <property type="match status" value="1"/>
</dbReference>
<dbReference type="Pfam" id="PF00216">
    <property type="entry name" value="Bac_DNA_binding"/>
    <property type="match status" value="1"/>
</dbReference>
<dbReference type="PRINTS" id="PR01727">
    <property type="entry name" value="DNABINDINGHU"/>
</dbReference>
<dbReference type="SMART" id="SM00411">
    <property type="entry name" value="BHL"/>
    <property type="match status" value="1"/>
</dbReference>
<dbReference type="SUPFAM" id="SSF47729">
    <property type="entry name" value="IHF-like DNA-binding proteins"/>
    <property type="match status" value="1"/>
</dbReference>
<dbReference type="PROSITE" id="PS00045">
    <property type="entry name" value="HISTONE_LIKE"/>
    <property type="match status" value="1"/>
</dbReference>
<sequence length="105" mass="11447">MSGKTITRAQLSEAVYQEVGLSRNESADLLEMVLNEMSEALVEGDTVKISSFGSFSVREKGERVGRNPKTGEEVPILPRRVLVFRPSQLLKARINDGAVGSQING</sequence>
<feature type="chain" id="PRO_0000277769" description="Integration host factor subunit alpha">
    <location>
        <begin position="1"/>
        <end position="105"/>
    </location>
</feature>
<organism>
    <name type="scientific">Rhodospirillum rubrum (strain ATCC 11170 / ATH 1.1.1 / DSM 467 / LMG 4362 / NCIMB 8255 / S1)</name>
    <dbReference type="NCBI Taxonomy" id="269796"/>
    <lineage>
        <taxon>Bacteria</taxon>
        <taxon>Pseudomonadati</taxon>
        <taxon>Pseudomonadota</taxon>
        <taxon>Alphaproteobacteria</taxon>
        <taxon>Rhodospirillales</taxon>
        <taxon>Rhodospirillaceae</taxon>
        <taxon>Rhodospirillum</taxon>
    </lineage>
</organism>